<keyword id="KW-0378">Hydrolase</keyword>
<organism>
    <name type="scientific">Vibrio campbellii (strain ATCC BAA-1116)</name>
    <dbReference type="NCBI Taxonomy" id="2902295"/>
    <lineage>
        <taxon>Bacteria</taxon>
        <taxon>Pseudomonadati</taxon>
        <taxon>Pseudomonadota</taxon>
        <taxon>Gammaproteobacteria</taxon>
        <taxon>Vibrionales</taxon>
        <taxon>Vibrionaceae</taxon>
        <taxon>Vibrio</taxon>
    </lineage>
</organism>
<evidence type="ECO:0000255" key="1">
    <source>
        <dbReference type="HAMAP-Rule" id="MF_01550"/>
    </source>
</evidence>
<comment type="function">
    <text evidence="1">Catalyzes the conversion of pppGpp to ppGpp. Guanosine pentaphosphate (pppGpp) is a cytoplasmic signaling molecule which together with ppGpp controls the 'stringent response', an adaptive process that allows bacteria to respond to amino acid starvation, resulting in the coordinated regulation of numerous cellular activities.</text>
</comment>
<comment type="catalytic activity">
    <reaction evidence="1">
        <text>guanosine 3'-diphosphate 5'-triphosphate + H2O = guanosine 3',5'-bis(diphosphate) + phosphate + H(+)</text>
        <dbReference type="Rhea" id="RHEA:13073"/>
        <dbReference type="ChEBI" id="CHEBI:15377"/>
        <dbReference type="ChEBI" id="CHEBI:15378"/>
        <dbReference type="ChEBI" id="CHEBI:43474"/>
        <dbReference type="ChEBI" id="CHEBI:77828"/>
        <dbReference type="ChEBI" id="CHEBI:142410"/>
        <dbReference type="EC" id="3.6.1.40"/>
    </reaction>
</comment>
<comment type="pathway">
    <text evidence="1">Purine metabolism; ppGpp biosynthesis; ppGpp from GTP: step 2/2.</text>
</comment>
<comment type="similarity">
    <text evidence="1">Belongs to the GppA/Ppx family. GppA subfamily.</text>
</comment>
<protein>
    <recommendedName>
        <fullName evidence="1">Guanosine-5'-triphosphate,3'-diphosphate pyrophosphatase</fullName>
        <ecNumber evidence="1">3.6.1.40</ecNumber>
    </recommendedName>
    <alternativeName>
        <fullName evidence="1">Guanosine pentaphosphate phosphohydrolase</fullName>
    </alternativeName>
    <alternativeName>
        <fullName evidence="1">pppGpp-5'-phosphohydrolase</fullName>
    </alternativeName>
</protein>
<gene>
    <name evidence="1" type="primary">gppA</name>
    <name type="ordered locus">VIBHAR_00339</name>
</gene>
<name>GPPA_VIBC1</name>
<dbReference type="EC" id="3.6.1.40" evidence="1"/>
<dbReference type="EMBL" id="CP000789">
    <property type="protein sequence ID" value="ABU69361.1"/>
    <property type="molecule type" value="Genomic_DNA"/>
</dbReference>
<dbReference type="RefSeq" id="WP_012126604.1">
    <property type="nucleotide sequence ID" value="NC_009783.1"/>
</dbReference>
<dbReference type="SMR" id="A7MXT2"/>
<dbReference type="KEGG" id="vha:VIBHAR_00339"/>
<dbReference type="PATRIC" id="fig|338187.25.peg.2240"/>
<dbReference type="UniPathway" id="UPA00908">
    <property type="reaction ID" value="UER00885"/>
</dbReference>
<dbReference type="Proteomes" id="UP000008152">
    <property type="component" value="Chromosome I"/>
</dbReference>
<dbReference type="GO" id="GO:0008894">
    <property type="term" value="F:guanosine-5'-triphosphate,3'-diphosphate diphosphatase activity"/>
    <property type="evidence" value="ECO:0007669"/>
    <property type="project" value="UniProtKB-UniRule"/>
</dbReference>
<dbReference type="GO" id="GO:0015974">
    <property type="term" value="P:guanosine pentaphosphate catabolic process"/>
    <property type="evidence" value="ECO:0007669"/>
    <property type="project" value="InterPro"/>
</dbReference>
<dbReference type="GO" id="GO:0015970">
    <property type="term" value="P:guanosine tetraphosphate biosynthetic process"/>
    <property type="evidence" value="ECO:0007669"/>
    <property type="project" value="UniProtKB-UniRule"/>
</dbReference>
<dbReference type="GO" id="GO:0015949">
    <property type="term" value="P:nucleobase-containing small molecule interconversion"/>
    <property type="evidence" value="ECO:0007669"/>
    <property type="project" value="TreeGrafter"/>
</dbReference>
<dbReference type="CDD" id="cd24117">
    <property type="entry name" value="ASKHA_NBD_EcGppA-like"/>
    <property type="match status" value="1"/>
</dbReference>
<dbReference type="FunFam" id="3.30.420.150:FF:000001">
    <property type="entry name" value="Guanosine-5'-triphosphate,3'-diphosphate pyrophosphatase"/>
    <property type="match status" value="1"/>
</dbReference>
<dbReference type="FunFam" id="3.30.420.40:FF:000023">
    <property type="entry name" value="Guanosine-5'-triphosphate,3'-diphosphate pyrophosphatase"/>
    <property type="match status" value="1"/>
</dbReference>
<dbReference type="Gene3D" id="3.30.420.40">
    <property type="match status" value="1"/>
</dbReference>
<dbReference type="Gene3D" id="3.30.420.150">
    <property type="entry name" value="Exopolyphosphatase. Domain 2"/>
    <property type="match status" value="1"/>
</dbReference>
<dbReference type="Gene3D" id="1.10.3210.10">
    <property type="entry name" value="Hypothetical protein af1432"/>
    <property type="match status" value="1"/>
</dbReference>
<dbReference type="HAMAP" id="MF_01550">
    <property type="entry name" value="GppA"/>
    <property type="match status" value="1"/>
</dbReference>
<dbReference type="InterPro" id="IPR043129">
    <property type="entry name" value="ATPase_NBD"/>
</dbReference>
<dbReference type="InterPro" id="IPR050273">
    <property type="entry name" value="GppA/Ppx_hydrolase"/>
</dbReference>
<dbReference type="InterPro" id="IPR023709">
    <property type="entry name" value="Guo-5TP_3DP_PyrP"/>
</dbReference>
<dbReference type="InterPro" id="IPR048950">
    <property type="entry name" value="Ppx_GppA_C"/>
</dbReference>
<dbReference type="InterPro" id="IPR003695">
    <property type="entry name" value="Ppx_GppA_N"/>
</dbReference>
<dbReference type="InterPro" id="IPR030673">
    <property type="entry name" value="PyroPPase_GppA_Ppx"/>
</dbReference>
<dbReference type="NCBIfam" id="NF008260">
    <property type="entry name" value="PRK11031.1"/>
    <property type="match status" value="1"/>
</dbReference>
<dbReference type="PANTHER" id="PTHR30005">
    <property type="entry name" value="EXOPOLYPHOSPHATASE"/>
    <property type="match status" value="1"/>
</dbReference>
<dbReference type="PANTHER" id="PTHR30005:SF0">
    <property type="entry name" value="RETROGRADE REGULATION PROTEIN 2"/>
    <property type="match status" value="1"/>
</dbReference>
<dbReference type="Pfam" id="PF02541">
    <property type="entry name" value="Ppx-GppA"/>
    <property type="match status" value="1"/>
</dbReference>
<dbReference type="Pfam" id="PF21447">
    <property type="entry name" value="Ppx-GppA_III"/>
    <property type="match status" value="1"/>
</dbReference>
<dbReference type="PIRSF" id="PIRSF001267">
    <property type="entry name" value="Pyrophosphatase_GppA_Ppx"/>
    <property type="match status" value="1"/>
</dbReference>
<dbReference type="SUPFAM" id="SSF53067">
    <property type="entry name" value="Actin-like ATPase domain"/>
    <property type="match status" value="2"/>
</dbReference>
<dbReference type="SUPFAM" id="SSF109604">
    <property type="entry name" value="HD-domain/PDEase-like"/>
    <property type="match status" value="1"/>
</dbReference>
<sequence length="497" mass="54724">MSQAGSSPLYAAIDLGSNSFHMLVVRHIDGSVQTMAKIKRKVRLAAGLDEHNSLSMEAMQRGWDCLSLFAERLQDIPKQNIRIVGTATLRTATNVDVFLEKANQILGQPIEVITGEEEAATIYKGVAHTSGGSGRRLVVDIGGASTELIIGEGFEAKALTSLKMGCVTWLENFFKDRQLNARNFDAAIEGAKQTLMPILGQYTDLGWDVCVGASGTVQALQEIMLAQGMDEVITHSKLKRLQKQAMLADHLEELDIEGLTLERALVFPSGLSILIAIFEQLEIDAMTLAGGALREGLVYEMVDELRQNDIRARTIRSVQNRYQLDCQYGEQVAKLAGKLLEQVGGEAWVAEPQGKVLLKTTAKLHEIGLTIDFKKGGEHSAYLLQHLDLPGYTRAQKFFIGEIARRYREQLTSLPEQHALSGTSGKRVLRLLRLAVLLSHRRNPDLEPCVTLTAEGDKLTLSIDAKWLEANPLTAAELEIESNRQTDIGWPLSIVTC</sequence>
<accession>A7MXT2</accession>
<reference key="1">
    <citation type="submission" date="2007-08" db="EMBL/GenBank/DDBJ databases">
        <authorList>
            <consortium name="The Vibrio harveyi Genome Sequencing Project"/>
            <person name="Bassler B."/>
            <person name="Clifton S.W."/>
            <person name="Fulton L."/>
            <person name="Delehaunty K."/>
            <person name="Fronick C."/>
            <person name="Harrison M."/>
            <person name="Markivic C."/>
            <person name="Fulton R."/>
            <person name="Tin-Wollam A.-M."/>
            <person name="Shah N."/>
            <person name="Pepin K."/>
            <person name="Nash W."/>
            <person name="Thiruvilangam P."/>
            <person name="Bhonagiri V."/>
            <person name="Waters C."/>
            <person name="Tu K.C."/>
            <person name="Irgon J."/>
            <person name="Wilson R.K."/>
        </authorList>
    </citation>
    <scope>NUCLEOTIDE SEQUENCE [LARGE SCALE GENOMIC DNA]</scope>
    <source>
        <strain>ATCC BAA-1116 / BB120</strain>
    </source>
</reference>
<proteinExistence type="inferred from homology"/>
<feature type="chain" id="PRO_0000314501" description="Guanosine-5'-triphosphate,3'-diphosphate pyrophosphatase">
    <location>
        <begin position="1"/>
        <end position="497"/>
    </location>
</feature>